<dbReference type="EC" id="3.1.26.11" evidence="1"/>
<dbReference type="EMBL" id="BA000022">
    <property type="protein sequence ID" value="BAA10267.1"/>
    <property type="molecule type" value="Genomic_DNA"/>
</dbReference>
<dbReference type="PIR" id="S74349">
    <property type="entry name" value="S74349"/>
</dbReference>
<dbReference type="SMR" id="Q55132"/>
<dbReference type="FunCoup" id="Q55132">
    <property type="interactions" value="310"/>
</dbReference>
<dbReference type="IntAct" id="Q55132">
    <property type="interactions" value="3"/>
</dbReference>
<dbReference type="STRING" id="1148.gene:10499766"/>
<dbReference type="PaxDb" id="1148-1001126"/>
<dbReference type="EnsemblBacteria" id="BAA10267">
    <property type="protein sequence ID" value="BAA10267"/>
    <property type="gene ID" value="BAA10267"/>
</dbReference>
<dbReference type="KEGG" id="syn:slr0050"/>
<dbReference type="eggNOG" id="COG1234">
    <property type="taxonomic scope" value="Bacteria"/>
</dbReference>
<dbReference type="InParanoid" id="Q55132"/>
<dbReference type="PhylomeDB" id="Q55132"/>
<dbReference type="Proteomes" id="UP000001425">
    <property type="component" value="Chromosome"/>
</dbReference>
<dbReference type="GO" id="GO:0042781">
    <property type="term" value="F:3'-tRNA processing endoribonuclease activity"/>
    <property type="evidence" value="ECO:0000318"/>
    <property type="project" value="GO_Central"/>
</dbReference>
<dbReference type="GO" id="GO:0008270">
    <property type="term" value="F:zinc ion binding"/>
    <property type="evidence" value="ECO:0007669"/>
    <property type="project" value="UniProtKB-UniRule"/>
</dbReference>
<dbReference type="CDD" id="cd07717">
    <property type="entry name" value="RNaseZ_ZiPD-like_MBL-fold"/>
    <property type="match status" value="1"/>
</dbReference>
<dbReference type="FunFam" id="3.60.15.10:FF:000002">
    <property type="entry name" value="Ribonuclease Z"/>
    <property type="match status" value="1"/>
</dbReference>
<dbReference type="Gene3D" id="3.60.15.10">
    <property type="entry name" value="Ribonuclease Z/Hydroxyacylglutathione hydrolase-like"/>
    <property type="match status" value="1"/>
</dbReference>
<dbReference type="HAMAP" id="MF_01818">
    <property type="entry name" value="RNase_Z_BN"/>
    <property type="match status" value="1"/>
</dbReference>
<dbReference type="InterPro" id="IPR001279">
    <property type="entry name" value="Metallo-B-lactamas"/>
</dbReference>
<dbReference type="InterPro" id="IPR036866">
    <property type="entry name" value="RibonucZ/Hydroxyglut_hydro"/>
</dbReference>
<dbReference type="InterPro" id="IPR013471">
    <property type="entry name" value="RNase_Z/BN"/>
</dbReference>
<dbReference type="NCBIfam" id="NF000801">
    <property type="entry name" value="PRK00055.1-3"/>
    <property type="match status" value="1"/>
</dbReference>
<dbReference type="NCBIfam" id="TIGR02651">
    <property type="entry name" value="RNase_Z"/>
    <property type="match status" value="1"/>
</dbReference>
<dbReference type="PANTHER" id="PTHR46018">
    <property type="entry name" value="ZINC PHOSPHODIESTERASE ELAC PROTEIN 1"/>
    <property type="match status" value="1"/>
</dbReference>
<dbReference type="PANTHER" id="PTHR46018:SF2">
    <property type="entry name" value="ZINC PHOSPHODIESTERASE ELAC PROTEIN 1"/>
    <property type="match status" value="1"/>
</dbReference>
<dbReference type="Pfam" id="PF12706">
    <property type="entry name" value="Lactamase_B_2"/>
    <property type="match status" value="2"/>
</dbReference>
<dbReference type="SMART" id="SM00849">
    <property type="entry name" value="Lactamase_B"/>
    <property type="match status" value="1"/>
</dbReference>
<dbReference type="SUPFAM" id="SSF56281">
    <property type="entry name" value="Metallo-hydrolase/oxidoreductase"/>
    <property type="match status" value="1"/>
</dbReference>
<proteinExistence type="inferred from homology"/>
<gene>
    <name evidence="1" type="primary">rnz</name>
    <name type="ordered locus">slr0050</name>
</gene>
<protein>
    <recommendedName>
        <fullName evidence="1">Ribonuclease Z</fullName>
        <shortName evidence="1">RNase Z</shortName>
        <ecNumber evidence="1">3.1.26.11</ecNumber>
    </recommendedName>
    <alternativeName>
        <fullName evidence="1">tRNA 3 endonuclease</fullName>
    </alternativeName>
    <alternativeName>
        <fullName evidence="1">tRNase Z</fullName>
    </alternativeName>
</protein>
<evidence type="ECO:0000255" key="1">
    <source>
        <dbReference type="HAMAP-Rule" id="MF_01818"/>
    </source>
</evidence>
<accession>Q55132</accession>
<comment type="function">
    <text evidence="1">Zinc phosphodiesterase, which displays some tRNA 3'-processing endonuclease activity. Probably involved in tRNA maturation, by removing a 3'-trailer from precursor tRNA.</text>
</comment>
<comment type="catalytic activity">
    <reaction evidence="1">
        <text>Endonucleolytic cleavage of RNA, removing extra 3' nucleotides from tRNA precursor, generating 3' termini of tRNAs. A 3'-hydroxy group is left at the tRNA terminus and a 5'-phosphoryl group is left at the trailer molecule.</text>
        <dbReference type="EC" id="3.1.26.11"/>
    </reaction>
</comment>
<comment type="cofactor">
    <cofactor evidence="1">
        <name>Zn(2+)</name>
        <dbReference type="ChEBI" id="CHEBI:29105"/>
    </cofactor>
    <text evidence="1">Binds 2 Zn(2+) ions.</text>
</comment>
<comment type="subunit">
    <text evidence="1">Homodimer.</text>
</comment>
<comment type="similarity">
    <text evidence="1">Belongs to the RNase Z family.</text>
</comment>
<feature type="chain" id="PRO_0000155916" description="Ribonuclease Z">
    <location>
        <begin position="1"/>
        <end position="326"/>
    </location>
</feature>
<feature type="active site" description="Proton acceptor" evidence="1">
    <location>
        <position position="66"/>
    </location>
</feature>
<feature type="binding site" evidence="1">
    <location>
        <position position="62"/>
    </location>
    <ligand>
        <name>Zn(2+)</name>
        <dbReference type="ChEBI" id="CHEBI:29105"/>
        <label>1</label>
        <note>catalytic</note>
    </ligand>
</feature>
<feature type="binding site" evidence="1">
    <location>
        <position position="64"/>
    </location>
    <ligand>
        <name>Zn(2+)</name>
        <dbReference type="ChEBI" id="CHEBI:29105"/>
        <label>1</label>
        <note>catalytic</note>
    </ligand>
</feature>
<feature type="binding site" evidence="1">
    <location>
        <position position="66"/>
    </location>
    <ligand>
        <name>Zn(2+)</name>
        <dbReference type="ChEBI" id="CHEBI:29105"/>
        <label>2</label>
        <note>catalytic</note>
    </ligand>
</feature>
<feature type="binding site" evidence="1">
    <location>
        <position position="67"/>
    </location>
    <ligand>
        <name>Zn(2+)</name>
        <dbReference type="ChEBI" id="CHEBI:29105"/>
        <label>2</label>
        <note>catalytic</note>
    </ligand>
</feature>
<feature type="binding site" evidence="1">
    <location>
        <position position="140"/>
    </location>
    <ligand>
        <name>Zn(2+)</name>
        <dbReference type="ChEBI" id="CHEBI:29105"/>
        <label>1</label>
        <note>catalytic</note>
    </ligand>
</feature>
<feature type="binding site" evidence="1">
    <location>
        <position position="211"/>
    </location>
    <ligand>
        <name>Zn(2+)</name>
        <dbReference type="ChEBI" id="CHEBI:29105"/>
        <label>1</label>
        <note>catalytic</note>
    </ligand>
</feature>
<feature type="binding site" evidence="1">
    <location>
        <position position="211"/>
    </location>
    <ligand>
        <name>Zn(2+)</name>
        <dbReference type="ChEBI" id="CHEBI:29105"/>
        <label>2</label>
        <note>catalytic</note>
    </ligand>
</feature>
<feature type="binding site" evidence="1">
    <location>
        <position position="269"/>
    </location>
    <ligand>
        <name>Zn(2+)</name>
        <dbReference type="ChEBI" id="CHEBI:29105"/>
        <label>2</label>
        <note>catalytic</note>
    </ligand>
</feature>
<name>RNZ_SYNY3</name>
<keyword id="KW-0255">Endonuclease</keyword>
<keyword id="KW-0378">Hydrolase</keyword>
<keyword id="KW-0479">Metal-binding</keyword>
<keyword id="KW-0540">Nuclease</keyword>
<keyword id="KW-1185">Reference proteome</keyword>
<keyword id="KW-0819">tRNA processing</keyword>
<keyword id="KW-0862">Zinc</keyword>
<organism>
    <name type="scientific">Synechocystis sp. (strain ATCC 27184 / PCC 6803 / Kazusa)</name>
    <dbReference type="NCBI Taxonomy" id="1111708"/>
    <lineage>
        <taxon>Bacteria</taxon>
        <taxon>Bacillati</taxon>
        <taxon>Cyanobacteriota</taxon>
        <taxon>Cyanophyceae</taxon>
        <taxon>Synechococcales</taxon>
        <taxon>Merismopediaceae</taxon>
        <taxon>Synechocystis</taxon>
    </lineage>
</organism>
<reference key="1">
    <citation type="journal article" date="1995" name="DNA Res.">
        <title>Sequence analysis of the genome of the unicellular cyanobacterium Synechocystis sp. strain PCC6803. I. Sequence features in the 1 Mb region from map positions 64% to 92% of the genome.</title>
        <authorList>
            <person name="Kaneko T."/>
            <person name="Tanaka A."/>
            <person name="Sato S."/>
            <person name="Kotani H."/>
            <person name="Sazuka T."/>
            <person name="Miyajima N."/>
            <person name="Sugiura M."/>
            <person name="Tabata S."/>
        </authorList>
    </citation>
    <scope>NUCLEOTIDE SEQUENCE [LARGE SCALE GENOMIC DNA]</scope>
    <source>
        <strain>ATCC 27184 / PCC 6803 / N-1</strain>
    </source>
</reference>
<reference key="2">
    <citation type="journal article" date="1996" name="DNA Res.">
        <title>Sequence analysis of the genome of the unicellular cyanobacterium Synechocystis sp. strain PCC6803. II. Sequence determination of the entire genome and assignment of potential protein-coding regions.</title>
        <authorList>
            <person name="Kaneko T."/>
            <person name="Sato S."/>
            <person name="Kotani H."/>
            <person name="Tanaka A."/>
            <person name="Asamizu E."/>
            <person name="Nakamura Y."/>
            <person name="Miyajima N."/>
            <person name="Hirosawa M."/>
            <person name="Sugiura M."/>
            <person name="Sasamoto S."/>
            <person name="Kimura T."/>
            <person name="Hosouchi T."/>
            <person name="Matsuno A."/>
            <person name="Muraki A."/>
            <person name="Nakazaki N."/>
            <person name="Naruo K."/>
            <person name="Okumura S."/>
            <person name="Shimpo S."/>
            <person name="Takeuchi C."/>
            <person name="Wada T."/>
            <person name="Watanabe A."/>
            <person name="Yamada M."/>
            <person name="Yasuda M."/>
            <person name="Tabata S."/>
        </authorList>
    </citation>
    <scope>NUCLEOTIDE SEQUENCE [LARGE SCALE GENOMIC DNA]</scope>
    <source>
        <strain>ATCC 27184 / PCC 6803 / Kazusa</strain>
    </source>
</reference>
<sequence>MEITFLGTSSGVPTRNRNVSSIALRLPQRAELWLFDCGEGTQHQFLRSEVKISQLTRIFITHLHGDHIFGLMGLLASSGLAGSGQGIEIYGPEGLGDYLEACCRFSSTHLGKRLKVHTVRENGLIYEDKDFQVHCGLLKHRIPAYGYRVEEKQRPGRFNVEQAEALGIPFGPIYGQLKQGKTVTLEDGRRIRGQDLCEPPEPGRKFVYCTDTVFCEEAIALAQEADLLVHEATFAHQDAQLAFDRLHSTSTMAAQVALLANVKQLIMTHFSPRYAPGNPLQLENLLAEAQAIFPNTRLARDFLTVEIPRRTADPAIAMSTPQASPA</sequence>